<reference key="1">
    <citation type="journal article" date="1994" name="J. Bacteriol.">
        <title>Characterization of the Thermus thermophilus locus encoding peptide deformylase and methionyl-tRNA(fMet) formyltransferase.</title>
        <authorList>
            <person name="Meinnel T."/>
            <person name="Blanquet S."/>
        </authorList>
    </citation>
    <scope>NUCLEOTIDE SEQUENCE [GENOMIC DNA]</scope>
    <source>
        <strain>VK1</strain>
    </source>
</reference>
<comment type="function">
    <text evidence="1">Attaches a formyl group to the free amino group of methionyl-tRNA(fMet). The formyl group appears to play a dual role in the initiator identity of N-formylmethionyl-tRNA by promoting its recognition by IF2 and preventing the misappropriation of this tRNA by the elongation apparatus.</text>
</comment>
<comment type="catalytic activity">
    <reaction evidence="1">
        <text>L-methionyl-tRNA(fMet) + (6R)-10-formyltetrahydrofolate = N-formyl-L-methionyl-tRNA(fMet) + (6S)-5,6,7,8-tetrahydrofolate + H(+)</text>
        <dbReference type="Rhea" id="RHEA:24380"/>
        <dbReference type="Rhea" id="RHEA-COMP:9952"/>
        <dbReference type="Rhea" id="RHEA-COMP:9953"/>
        <dbReference type="ChEBI" id="CHEBI:15378"/>
        <dbReference type="ChEBI" id="CHEBI:57453"/>
        <dbReference type="ChEBI" id="CHEBI:78530"/>
        <dbReference type="ChEBI" id="CHEBI:78844"/>
        <dbReference type="ChEBI" id="CHEBI:195366"/>
        <dbReference type="EC" id="2.1.2.9"/>
    </reaction>
</comment>
<comment type="similarity">
    <text evidence="1 2">Belongs to the Fmt family.</text>
</comment>
<name>FMT_THETH</name>
<organism>
    <name type="scientific">Thermus thermophilus</name>
    <dbReference type="NCBI Taxonomy" id="274"/>
    <lineage>
        <taxon>Bacteria</taxon>
        <taxon>Thermotogati</taxon>
        <taxon>Deinococcota</taxon>
        <taxon>Deinococci</taxon>
        <taxon>Thermales</taxon>
        <taxon>Thermaceae</taxon>
        <taxon>Thermus</taxon>
    </lineage>
</organism>
<keyword id="KW-0648">Protein biosynthesis</keyword>
<keyword id="KW-0808">Transferase</keyword>
<accession>P43523</accession>
<evidence type="ECO:0000255" key="1">
    <source>
        <dbReference type="HAMAP-Rule" id="MF_00182"/>
    </source>
</evidence>
<evidence type="ECO:0000305" key="2"/>
<dbReference type="EC" id="2.1.2.9" evidence="1"/>
<dbReference type="EMBL" id="X79087">
    <property type="protein sequence ID" value="CAA55696.1"/>
    <property type="molecule type" value="Genomic_DNA"/>
</dbReference>
<dbReference type="RefSeq" id="WP_011174029.1">
    <property type="nucleotide sequence ID" value="NZ_CP144687.1"/>
</dbReference>
<dbReference type="SMR" id="P43523"/>
<dbReference type="GO" id="GO:0005829">
    <property type="term" value="C:cytosol"/>
    <property type="evidence" value="ECO:0007669"/>
    <property type="project" value="TreeGrafter"/>
</dbReference>
<dbReference type="GO" id="GO:0004479">
    <property type="term" value="F:methionyl-tRNA formyltransferase activity"/>
    <property type="evidence" value="ECO:0007669"/>
    <property type="project" value="UniProtKB-UniRule"/>
</dbReference>
<dbReference type="CDD" id="cd08646">
    <property type="entry name" value="FMT_core_Met-tRNA-FMT_N"/>
    <property type="match status" value="1"/>
</dbReference>
<dbReference type="CDD" id="cd08704">
    <property type="entry name" value="Met_tRNA_FMT_C"/>
    <property type="match status" value="1"/>
</dbReference>
<dbReference type="Gene3D" id="3.40.50.12230">
    <property type="match status" value="1"/>
</dbReference>
<dbReference type="HAMAP" id="MF_00182">
    <property type="entry name" value="Formyl_trans"/>
    <property type="match status" value="1"/>
</dbReference>
<dbReference type="InterPro" id="IPR005794">
    <property type="entry name" value="Fmt"/>
</dbReference>
<dbReference type="InterPro" id="IPR005793">
    <property type="entry name" value="Formyl_trans_C"/>
</dbReference>
<dbReference type="InterPro" id="IPR002376">
    <property type="entry name" value="Formyl_transf_N"/>
</dbReference>
<dbReference type="InterPro" id="IPR036477">
    <property type="entry name" value="Formyl_transf_N_sf"/>
</dbReference>
<dbReference type="InterPro" id="IPR011034">
    <property type="entry name" value="Formyl_transferase-like_C_sf"/>
</dbReference>
<dbReference type="InterPro" id="IPR044135">
    <property type="entry name" value="Met-tRNA-FMT_C"/>
</dbReference>
<dbReference type="InterPro" id="IPR041711">
    <property type="entry name" value="Met-tRNA-FMT_N"/>
</dbReference>
<dbReference type="NCBIfam" id="TIGR00460">
    <property type="entry name" value="fmt"/>
    <property type="match status" value="1"/>
</dbReference>
<dbReference type="PANTHER" id="PTHR11138">
    <property type="entry name" value="METHIONYL-TRNA FORMYLTRANSFERASE"/>
    <property type="match status" value="1"/>
</dbReference>
<dbReference type="PANTHER" id="PTHR11138:SF5">
    <property type="entry name" value="METHIONYL-TRNA FORMYLTRANSFERASE, MITOCHONDRIAL"/>
    <property type="match status" value="1"/>
</dbReference>
<dbReference type="Pfam" id="PF02911">
    <property type="entry name" value="Formyl_trans_C"/>
    <property type="match status" value="1"/>
</dbReference>
<dbReference type="Pfam" id="PF00551">
    <property type="entry name" value="Formyl_trans_N"/>
    <property type="match status" value="1"/>
</dbReference>
<dbReference type="SUPFAM" id="SSF50486">
    <property type="entry name" value="FMT C-terminal domain-like"/>
    <property type="match status" value="1"/>
</dbReference>
<dbReference type="SUPFAM" id="SSF53328">
    <property type="entry name" value="Formyltransferase"/>
    <property type="match status" value="1"/>
</dbReference>
<feature type="chain" id="PRO_0000083074" description="Methionyl-tRNA formyltransferase">
    <location>
        <begin position="1"/>
        <end position="305"/>
    </location>
</feature>
<feature type="binding site" evidence="1">
    <location>
        <begin position="108"/>
        <end position="111"/>
    </location>
    <ligand>
        <name>(6S)-5,6,7,8-tetrahydrofolate</name>
        <dbReference type="ChEBI" id="CHEBI:57453"/>
    </ligand>
</feature>
<gene>
    <name evidence="1" type="primary">fmt</name>
</gene>
<protein>
    <recommendedName>
        <fullName evidence="1">Methionyl-tRNA formyltransferase</fullName>
        <ecNumber evidence="1">2.1.2.9</ecNumber>
    </recommendedName>
</protein>
<sequence length="305" mass="33323">MRVAFFGTPLWAVPVLDALRKRHQVVLVVSQPDKPQGRGLRPAPSPVARYAEAEGLPLLRPARLREEAFLEALRQAAPEVAVVAAYGKLIPKEALDIPPHGFLNLHPSLLPKYRGAAPVQRALLAGERETGVSIMRLDEGLDTGPLYAVWRTPILPDEDAVALGNRLRDKGVELLLEVLERLPELTPRPQEGEVSYAPPLSKEEGRLDFGESAEALYRRHRAVQPWPGSYFFHRGRRVKALRLRPEPGEGEPGVVARVGPEGVAVGTASGLLLLLEVQPEGRRAMPAADWARGYGVAPGTRLGQV</sequence>
<proteinExistence type="inferred from homology"/>